<name>NAMA_BACAC</name>
<proteinExistence type="inferred from homology"/>
<gene>
    <name evidence="1" type="primary">namA</name>
    <name type="ordered locus">BAMEG_2552</name>
</gene>
<sequence>MNSELFSPYTIKDVTLKNRIVMSPMCMYSSENEDGQVTNFHLIHYGTRAAGQVGLVMIEATAVLPEGRISNKDLGIWDDSLIEGLHKTTTFIHDNGAKAAIQLAHAGRKAELETDALAPSAVPFNETMKIPVEMSIHQIKNTILAFQQAAIRSKQAGFDVIEIHGAHGYLINEFLSPLSNKRTDEYGGSPENRYRFLREIIDSINEVWNGPLFVRISANDYHPDGLTVQDYVQYTKWMKEQGVDLIDCSSGAVVPARIDVYPGYQVQYAKHIKEHANIATGAVGLITTGAQAEQILNNNEADLIFIGRELLRNPYFPRIAANELGFELEEPHQYERAPGKISTNK</sequence>
<protein>
    <recommendedName>
        <fullName evidence="1">NADPH dehydrogenase</fullName>
        <ecNumber evidence="1">1.6.99.1</ecNumber>
    </recommendedName>
</protein>
<reference key="1">
    <citation type="submission" date="2008-10" db="EMBL/GenBank/DDBJ databases">
        <title>Genome sequence of Bacillus anthracis str. CDC 684.</title>
        <authorList>
            <person name="Dodson R.J."/>
            <person name="Munk A.C."/>
            <person name="Brettin T."/>
            <person name="Bruce D."/>
            <person name="Detter C."/>
            <person name="Tapia R."/>
            <person name="Han C."/>
            <person name="Sutton G."/>
            <person name="Sims D."/>
        </authorList>
    </citation>
    <scope>NUCLEOTIDE SEQUENCE [LARGE SCALE GENOMIC DNA]</scope>
    <source>
        <strain>CDC 684 / NRRL 3495</strain>
    </source>
</reference>
<feature type="chain" id="PRO_1000185857" description="NADPH dehydrogenase">
    <location>
        <begin position="1"/>
        <end position="345"/>
    </location>
</feature>
<feature type="binding site" evidence="1">
    <location>
        <begin position="23"/>
        <end position="26"/>
    </location>
    <ligand>
        <name>FMN</name>
        <dbReference type="ChEBI" id="CHEBI:58210"/>
    </ligand>
</feature>
<feature type="binding site" evidence="1">
    <location>
        <position position="28"/>
    </location>
    <ligand>
        <name>substrate</name>
    </ligand>
</feature>
<feature type="binding site" evidence="1">
    <location>
        <position position="60"/>
    </location>
    <ligand>
        <name>FMN</name>
        <dbReference type="ChEBI" id="CHEBI:58210"/>
    </ligand>
</feature>
<feature type="binding site" evidence="1">
    <location>
        <position position="102"/>
    </location>
    <ligand>
        <name>FMN</name>
        <dbReference type="ChEBI" id="CHEBI:58210"/>
    </ligand>
</feature>
<feature type="binding site" evidence="1">
    <location>
        <begin position="164"/>
        <end position="167"/>
    </location>
    <ligand>
        <name>substrate</name>
    </ligand>
</feature>
<feature type="binding site" evidence="1">
    <location>
        <position position="215"/>
    </location>
    <ligand>
        <name>FMN</name>
        <dbReference type="ChEBI" id="CHEBI:58210"/>
    </ligand>
</feature>
<feature type="binding site" evidence="1">
    <location>
        <begin position="307"/>
        <end position="308"/>
    </location>
    <ligand>
        <name>FMN</name>
        <dbReference type="ChEBI" id="CHEBI:58210"/>
    </ligand>
</feature>
<organism>
    <name type="scientific">Bacillus anthracis (strain CDC 684 / NRRL 3495)</name>
    <dbReference type="NCBI Taxonomy" id="568206"/>
    <lineage>
        <taxon>Bacteria</taxon>
        <taxon>Bacillati</taxon>
        <taxon>Bacillota</taxon>
        <taxon>Bacilli</taxon>
        <taxon>Bacillales</taxon>
        <taxon>Bacillaceae</taxon>
        <taxon>Bacillus</taxon>
        <taxon>Bacillus cereus group</taxon>
    </lineage>
</organism>
<accession>C3L5F3</accession>
<keyword id="KW-0216">Detoxification</keyword>
<keyword id="KW-0285">Flavoprotein</keyword>
<keyword id="KW-0288">FMN</keyword>
<keyword id="KW-0521">NADP</keyword>
<keyword id="KW-0560">Oxidoreductase</keyword>
<comment type="function">
    <text evidence="1">Catalyzes the reduction of the double bond of an array of alpha,beta-unsaturated aldehydes and ketones. It also reduces the nitro group of nitroester and nitroaromatic compounds. It could have a role in detoxification processes.</text>
</comment>
<comment type="catalytic activity">
    <reaction evidence="1">
        <text>A + NADPH + H(+) = AH2 + NADP(+)</text>
        <dbReference type="Rhea" id="RHEA:13149"/>
        <dbReference type="ChEBI" id="CHEBI:13193"/>
        <dbReference type="ChEBI" id="CHEBI:15378"/>
        <dbReference type="ChEBI" id="CHEBI:17499"/>
        <dbReference type="ChEBI" id="CHEBI:57783"/>
        <dbReference type="ChEBI" id="CHEBI:58349"/>
        <dbReference type="EC" id="1.6.99.1"/>
    </reaction>
</comment>
<comment type="cofactor">
    <cofactor evidence="1">
        <name>FMN</name>
        <dbReference type="ChEBI" id="CHEBI:58210"/>
    </cofactor>
</comment>
<comment type="subunit">
    <text evidence="1">Homotetramer.</text>
</comment>
<comment type="similarity">
    <text evidence="1">Belongs to the NADH:flavin oxidoreductase/NADH oxidase family. NamA subfamily.</text>
</comment>
<dbReference type="EC" id="1.6.99.1" evidence="1"/>
<dbReference type="EMBL" id="CP001215">
    <property type="protein sequence ID" value="ACP12316.1"/>
    <property type="molecule type" value="Genomic_DNA"/>
</dbReference>
<dbReference type="RefSeq" id="WP_001083633.1">
    <property type="nucleotide sequence ID" value="NC_012581.1"/>
</dbReference>
<dbReference type="SMR" id="C3L5F3"/>
<dbReference type="GeneID" id="45021954"/>
<dbReference type="KEGG" id="bah:BAMEG_2552"/>
<dbReference type="HOGENOM" id="CLU_012153_2_1_9"/>
<dbReference type="GO" id="GO:0010181">
    <property type="term" value="F:FMN binding"/>
    <property type="evidence" value="ECO:0007669"/>
    <property type="project" value="UniProtKB-UniRule"/>
</dbReference>
<dbReference type="GO" id="GO:0050661">
    <property type="term" value="F:NADP binding"/>
    <property type="evidence" value="ECO:0007669"/>
    <property type="project" value="UniProtKB-UniRule"/>
</dbReference>
<dbReference type="GO" id="GO:0003959">
    <property type="term" value="F:NADPH dehydrogenase activity"/>
    <property type="evidence" value="ECO:0007669"/>
    <property type="project" value="UniProtKB-UniRule"/>
</dbReference>
<dbReference type="GO" id="GO:0009636">
    <property type="term" value="P:response to toxic substance"/>
    <property type="evidence" value="ECO:0007669"/>
    <property type="project" value="UniProtKB-KW"/>
</dbReference>
<dbReference type="CDD" id="cd02932">
    <property type="entry name" value="OYE_YqiM_FMN"/>
    <property type="match status" value="1"/>
</dbReference>
<dbReference type="Gene3D" id="3.20.20.70">
    <property type="entry name" value="Aldolase class I"/>
    <property type="match status" value="1"/>
</dbReference>
<dbReference type="HAMAP" id="MF_01614">
    <property type="entry name" value="NamA"/>
    <property type="match status" value="1"/>
</dbReference>
<dbReference type="InterPro" id="IPR013785">
    <property type="entry name" value="Aldolase_TIM"/>
</dbReference>
<dbReference type="InterPro" id="IPR023663">
    <property type="entry name" value="NADPH_DH_bac"/>
</dbReference>
<dbReference type="InterPro" id="IPR001155">
    <property type="entry name" value="OxRdtase_FMN_N"/>
</dbReference>
<dbReference type="InterPro" id="IPR044152">
    <property type="entry name" value="YqjM-like"/>
</dbReference>
<dbReference type="NCBIfam" id="NF010047">
    <property type="entry name" value="PRK13523.1"/>
    <property type="match status" value="1"/>
</dbReference>
<dbReference type="PANTHER" id="PTHR43303">
    <property type="entry name" value="NADPH DEHYDROGENASE C23G7.10C-RELATED"/>
    <property type="match status" value="1"/>
</dbReference>
<dbReference type="PANTHER" id="PTHR43303:SF4">
    <property type="entry name" value="NADPH DEHYDROGENASE C23G7.10C-RELATED"/>
    <property type="match status" value="1"/>
</dbReference>
<dbReference type="Pfam" id="PF00724">
    <property type="entry name" value="Oxidored_FMN"/>
    <property type="match status" value="1"/>
</dbReference>
<dbReference type="SUPFAM" id="SSF51395">
    <property type="entry name" value="FMN-linked oxidoreductases"/>
    <property type="match status" value="1"/>
</dbReference>
<evidence type="ECO:0000255" key="1">
    <source>
        <dbReference type="HAMAP-Rule" id="MF_01614"/>
    </source>
</evidence>